<sequence>MGKTLYQKLFDAHVVYEAEGETPILYINRHLIHEVTSPQAFDGLRVAGRQVRQVNKTFGTMDHSISTQVRDVNLLEGQAKIQVLELDKNCKATGIELFDMNTKQQGIVHVMGPEQGLTLPGMTIVCGDSHTATHGAFGALAFGIGTSEVEHVLATQTLKQARAKNMKVEVRGKVNPGITAKDIVLAIIGKTTMAGGTGHVVEFCGEAIRDLSMEGRMTVCNMAIEFGAKAGLIAPDETTFEYLKDRPHAPKGKDWDDAIEYWKTLKSDDDAQFDTVVVLEAKDIAPQVTWGTNPGQVIAIDQLVPNPAEMSDPVTKTSAEKALAYIGLQANTDLKDVPVDQVFIGSCTNSRIEDLRAAAAVMKGRKKADNVKRVLVVPGSGLVKEQAEKEGLDKIFIAAGAEWRNPGCSMCLGMNDDRLGEWERCASTSNRNFEGRQGRNGRTHLVSPAMAAAAAVFGKFVDIRTIKLN</sequence>
<evidence type="ECO:0000255" key="1">
    <source>
        <dbReference type="HAMAP-Rule" id="MF_01026"/>
    </source>
</evidence>
<gene>
    <name evidence="1" type="primary">leuC</name>
    <name type="ordered locus">Asuc_1909</name>
</gene>
<organism>
    <name type="scientific">Actinobacillus succinogenes (strain ATCC 55618 / DSM 22257 / CCUG 43843 / 130Z)</name>
    <dbReference type="NCBI Taxonomy" id="339671"/>
    <lineage>
        <taxon>Bacteria</taxon>
        <taxon>Pseudomonadati</taxon>
        <taxon>Pseudomonadota</taxon>
        <taxon>Gammaproteobacteria</taxon>
        <taxon>Pasteurellales</taxon>
        <taxon>Pasteurellaceae</taxon>
        <taxon>Actinobacillus</taxon>
    </lineage>
</organism>
<keyword id="KW-0004">4Fe-4S</keyword>
<keyword id="KW-0028">Amino-acid biosynthesis</keyword>
<keyword id="KW-0100">Branched-chain amino acid biosynthesis</keyword>
<keyword id="KW-0408">Iron</keyword>
<keyword id="KW-0411">Iron-sulfur</keyword>
<keyword id="KW-0432">Leucine biosynthesis</keyword>
<keyword id="KW-0456">Lyase</keyword>
<keyword id="KW-0479">Metal-binding</keyword>
<keyword id="KW-1185">Reference proteome</keyword>
<dbReference type="EC" id="4.2.1.33" evidence="1"/>
<dbReference type="EMBL" id="CP000746">
    <property type="protein sequence ID" value="ABR75257.1"/>
    <property type="molecule type" value="Genomic_DNA"/>
</dbReference>
<dbReference type="RefSeq" id="WP_012073634.1">
    <property type="nucleotide sequence ID" value="NC_009655.1"/>
</dbReference>
<dbReference type="SMR" id="A6VQL0"/>
<dbReference type="STRING" id="339671.Asuc_1909"/>
<dbReference type="KEGG" id="asu:Asuc_1909"/>
<dbReference type="eggNOG" id="COG0065">
    <property type="taxonomic scope" value="Bacteria"/>
</dbReference>
<dbReference type="HOGENOM" id="CLU_006714_3_4_6"/>
<dbReference type="OrthoDB" id="9802769at2"/>
<dbReference type="UniPathway" id="UPA00048">
    <property type="reaction ID" value="UER00071"/>
</dbReference>
<dbReference type="Proteomes" id="UP000001114">
    <property type="component" value="Chromosome"/>
</dbReference>
<dbReference type="GO" id="GO:0003861">
    <property type="term" value="F:3-isopropylmalate dehydratase activity"/>
    <property type="evidence" value="ECO:0007669"/>
    <property type="project" value="UniProtKB-UniRule"/>
</dbReference>
<dbReference type="GO" id="GO:0051539">
    <property type="term" value="F:4 iron, 4 sulfur cluster binding"/>
    <property type="evidence" value="ECO:0007669"/>
    <property type="project" value="UniProtKB-KW"/>
</dbReference>
<dbReference type="GO" id="GO:0046872">
    <property type="term" value="F:metal ion binding"/>
    <property type="evidence" value="ECO:0007669"/>
    <property type="project" value="UniProtKB-KW"/>
</dbReference>
<dbReference type="GO" id="GO:0009098">
    <property type="term" value="P:L-leucine biosynthetic process"/>
    <property type="evidence" value="ECO:0007669"/>
    <property type="project" value="UniProtKB-UniRule"/>
</dbReference>
<dbReference type="CDD" id="cd01583">
    <property type="entry name" value="IPMI"/>
    <property type="match status" value="1"/>
</dbReference>
<dbReference type="FunFam" id="3.30.499.10:FF:000006">
    <property type="entry name" value="3-isopropylmalate dehydratase large subunit"/>
    <property type="match status" value="1"/>
</dbReference>
<dbReference type="FunFam" id="3.30.499.10:FF:000007">
    <property type="entry name" value="3-isopropylmalate dehydratase large subunit"/>
    <property type="match status" value="1"/>
</dbReference>
<dbReference type="Gene3D" id="3.30.499.10">
    <property type="entry name" value="Aconitase, domain 3"/>
    <property type="match status" value="2"/>
</dbReference>
<dbReference type="HAMAP" id="MF_01026">
    <property type="entry name" value="LeuC_type1"/>
    <property type="match status" value="1"/>
</dbReference>
<dbReference type="InterPro" id="IPR004430">
    <property type="entry name" value="3-IsopropMal_deHydase_lsu"/>
</dbReference>
<dbReference type="InterPro" id="IPR015931">
    <property type="entry name" value="Acnase/IPM_dHydase_lsu_aba_1/3"/>
</dbReference>
<dbReference type="InterPro" id="IPR001030">
    <property type="entry name" value="Acoase/IPM_deHydtase_lsu_aba"/>
</dbReference>
<dbReference type="InterPro" id="IPR018136">
    <property type="entry name" value="Aconitase_4Fe-4S_BS"/>
</dbReference>
<dbReference type="InterPro" id="IPR036008">
    <property type="entry name" value="Aconitase_4Fe-4S_dom"/>
</dbReference>
<dbReference type="InterPro" id="IPR050067">
    <property type="entry name" value="IPM_dehydratase_rel_enz"/>
</dbReference>
<dbReference type="InterPro" id="IPR033941">
    <property type="entry name" value="IPMI_cat"/>
</dbReference>
<dbReference type="NCBIfam" id="TIGR00170">
    <property type="entry name" value="leuC"/>
    <property type="match status" value="1"/>
</dbReference>
<dbReference type="NCBIfam" id="NF004016">
    <property type="entry name" value="PRK05478.1"/>
    <property type="match status" value="1"/>
</dbReference>
<dbReference type="NCBIfam" id="NF009116">
    <property type="entry name" value="PRK12466.1"/>
    <property type="match status" value="1"/>
</dbReference>
<dbReference type="PANTHER" id="PTHR43822:SF9">
    <property type="entry name" value="3-ISOPROPYLMALATE DEHYDRATASE"/>
    <property type="match status" value="1"/>
</dbReference>
<dbReference type="PANTHER" id="PTHR43822">
    <property type="entry name" value="HOMOACONITASE, MITOCHONDRIAL-RELATED"/>
    <property type="match status" value="1"/>
</dbReference>
<dbReference type="Pfam" id="PF00330">
    <property type="entry name" value="Aconitase"/>
    <property type="match status" value="1"/>
</dbReference>
<dbReference type="PRINTS" id="PR00415">
    <property type="entry name" value="ACONITASE"/>
</dbReference>
<dbReference type="SUPFAM" id="SSF53732">
    <property type="entry name" value="Aconitase iron-sulfur domain"/>
    <property type="match status" value="1"/>
</dbReference>
<dbReference type="PROSITE" id="PS00450">
    <property type="entry name" value="ACONITASE_1"/>
    <property type="match status" value="1"/>
</dbReference>
<dbReference type="PROSITE" id="PS01244">
    <property type="entry name" value="ACONITASE_2"/>
    <property type="match status" value="1"/>
</dbReference>
<reference key="1">
    <citation type="journal article" date="2010" name="BMC Genomics">
        <title>A genomic perspective on the potential of Actinobacillus succinogenes for industrial succinate production.</title>
        <authorList>
            <person name="McKinlay J.B."/>
            <person name="Laivenieks M."/>
            <person name="Schindler B.D."/>
            <person name="McKinlay A.A."/>
            <person name="Siddaramappa S."/>
            <person name="Challacombe J.F."/>
            <person name="Lowry S.R."/>
            <person name="Clum A."/>
            <person name="Lapidus A.L."/>
            <person name="Burkhart K.B."/>
            <person name="Harkins V."/>
            <person name="Vieille C."/>
        </authorList>
    </citation>
    <scope>NUCLEOTIDE SEQUENCE [LARGE SCALE GENOMIC DNA]</scope>
    <source>
        <strain>ATCC 55618 / DSM 22257 / CCUG 43843 / 130Z</strain>
    </source>
</reference>
<comment type="function">
    <text evidence="1">Catalyzes the isomerization between 2-isopropylmalate and 3-isopropylmalate, via the formation of 2-isopropylmaleate.</text>
</comment>
<comment type="catalytic activity">
    <reaction evidence="1">
        <text>(2R,3S)-3-isopropylmalate = (2S)-2-isopropylmalate</text>
        <dbReference type="Rhea" id="RHEA:32287"/>
        <dbReference type="ChEBI" id="CHEBI:1178"/>
        <dbReference type="ChEBI" id="CHEBI:35121"/>
        <dbReference type="EC" id="4.2.1.33"/>
    </reaction>
</comment>
<comment type="cofactor">
    <cofactor evidence="1">
        <name>[4Fe-4S] cluster</name>
        <dbReference type="ChEBI" id="CHEBI:49883"/>
    </cofactor>
    <text evidence="1">Binds 1 [4Fe-4S] cluster per subunit.</text>
</comment>
<comment type="pathway">
    <text evidence="1">Amino-acid biosynthesis; L-leucine biosynthesis; L-leucine from 3-methyl-2-oxobutanoate: step 2/4.</text>
</comment>
<comment type="subunit">
    <text evidence="1">Heterodimer of LeuC and LeuD.</text>
</comment>
<comment type="similarity">
    <text evidence="1">Belongs to the aconitase/IPM isomerase family. LeuC type 1 subfamily.</text>
</comment>
<proteinExistence type="inferred from homology"/>
<protein>
    <recommendedName>
        <fullName evidence="1">3-isopropylmalate dehydratase large subunit</fullName>
        <ecNumber evidence="1">4.2.1.33</ecNumber>
    </recommendedName>
    <alternativeName>
        <fullName evidence="1">Alpha-IPM isomerase</fullName>
        <shortName evidence="1">IPMI</shortName>
    </alternativeName>
    <alternativeName>
        <fullName evidence="1">Isopropylmalate isomerase</fullName>
    </alternativeName>
</protein>
<name>LEUC_ACTSZ</name>
<accession>A6VQL0</accession>
<feature type="chain" id="PRO_1000072946" description="3-isopropylmalate dehydratase large subunit">
    <location>
        <begin position="1"/>
        <end position="469"/>
    </location>
</feature>
<feature type="binding site" evidence="1">
    <location>
        <position position="347"/>
    </location>
    <ligand>
        <name>[4Fe-4S] cluster</name>
        <dbReference type="ChEBI" id="CHEBI:49883"/>
    </ligand>
</feature>
<feature type="binding site" evidence="1">
    <location>
        <position position="408"/>
    </location>
    <ligand>
        <name>[4Fe-4S] cluster</name>
        <dbReference type="ChEBI" id="CHEBI:49883"/>
    </ligand>
</feature>
<feature type="binding site" evidence="1">
    <location>
        <position position="411"/>
    </location>
    <ligand>
        <name>[4Fe-4S] cluster</name>
        <dbReference type="ChEBI" id="CHEBI:49883"/>
    </ligand>
</feature>